<organism>
    <name type="scientific">Pseudomonas aeruginosa (strain ATCC 15692 / DSM 22644 / CIP 104116 / JCM 14847 / LMG 12228 / 1C / PRS 101 / PAO1)</name>
    <dbReference type="NCBI Taxonomy" id="208964"/>
    <lineage>
        <taxon>Bacteria</taxon>
        <taxon>Pseudomonadati</taxon>
        <taxon>Pseudomonadota</taxon>
        <taxon>Gammaproteobacteria</taxon>
        <taxon>Pseudomonadales</taxon>
        <taxon>Pseudomonadaceae</taxon>
        <taxon>Pseudomonas</taxon>
    </lineage>
</organism>
<gene>
    <name type="primary">msuD</name>
    <name type="ordered locus">PA2356</name>
</gene>
<feature type="chain" id="PRO_0000216710" description="Methanesulfonate monooxygenase">
    <location>
        <begin position="1"/>
        <end position="381"/>
    </location>
</feature>
<feature type="sequence conflict" description="In Ref. 1; AAB82564." evidence="2" ref="1">
    <original>P</original>
    <variation>S</variation>
    <location>
        <position position="28"/>
    </location>
</feature>
<accession>Q9I1C2</accession>
<accession>O31039</accession>
<evidence type="ECO:0000269" key="1">
    <source>
    </source>
</evidence>
<evidence type="ECO:0000305" key="2"/>
<dbReference type="EC" id="1.14.14.5"/>
<dbReference type="EMBL" id="AF026067">
    <property type="protein sequence ID" value="AAB82564.1"/>
    <property type="molecule type" value="Genomic_DNA"/>
</dbReference>
<dbReference type="EMBL" id="AE004091">
    <property type="protein sequence ID" value="AAG05744.1"/>
    <property type="molecule type" value="Genomic_DNA"/>
</dbReference>
<dbReference type="PIR" id="E83352">
    <property type="entry name" value="E83352"/>
</dbReference>
<dbReference type="RefSeq" id="NP_251046.1">
    <property type="nucleotide sequence ID" value="NC_002516.2"/>
</dbReference>
<dbReference type="SMR" id="Q9I1C2"/>
<dbReference type="STRING" id="208964.PA2356"/>
<dbReference type="PaxDb" id="208964-PA2356"/>
<dbReference type="GeneID" id="879651"/>
<dbReference type="KEGG" id="pae:PA2356"/>
<dbReference type="PATRIC" id="fig|208964.12.peg.2465"/>
<dbReference type="PseudoCAP" id="PA2356"/>
<dbReference type="HOGENOM" id="CLU_027853_1_0_6"/>
<dbReference type="InParanoid" id="Q9I1C2"/>
<dbReference type="OrthoDB" id="9814695at2"/>
<dbReference type="PhylomeDB" id="Q9I1C2"/>
<dbReference type="BioCyc" id="PAER208964:G1FZ6-2395-MONOMER"/>
<dbReference type="BRENDA" id="1.14.14.34">
    <property type="organism ID" value="5087"/>
</dbReference>
<dbReference type="Proteomes" id="UP000002438">
    <property type="component" value="Chromosome"/>
</dbReference>
<dbReference type="GO" id="GO:0008726">
    <property type="term" value="F:alkanesulfonate monooxygenase activity"/>
    <property type="evidence" value="ECO:0000318"/>
    <property type="project" value="GO_Central"/>
</dbReference>
<dbReference type="GO" id="GO:0046306">
    <property type="term" value="P:alkanesulfonate catabolic process"/>
    <property type="evidence" value="ECO:0000318"/>
    <property type="project" value="GO_Central"/>
</dbReference>
<dbReference type="CDD" id="cd01094">
    <property type="entry name" value="Alkanesulfonate_monoxygenase"/>
    <property type="match status" value="1"/>
</dbReference>
<dbReference type="FunFam" id="3.20.20.30:FF:000001">
    <property type="entry name" value="Alkanesulfonate monooxygenase"/>
    <property type="match status" value="1"/>
</dbReference>
<dbReference type="Gene3D" id="3.20.20.30">
    <property type="entry name" value="Luciferase-like domain"/>
    <property type="match status" value="1"/>
</dbReference>
<dbReference type="HAMAP" id="MF_01229">
    <property type="entry name" value="Alkanesulf_monooxygen"/>
    <property type="match status" value="1"/>
</dbReference>
<dbReference type="InterPro" id="IPR019911">
    <property type="entry name" value="Alkanesulphonate_mOase_FMN-dep"/>
</dbReference>
<dbReference type="InterPro" id="IPR011251">
    <property type="entry name" value="Luciferase-like_dom"/>
</dbReference>
<dbReference type="InterPro" id="IPR036661">
    <property type="entry name" value="Luciferase-like_sf"/>
</dbReference>
<dbReference type="InterPro" id="IPR050172">
    <property type="entry name" value="SsuD_RutA_monooxygenase"/>
</dbReference>
<dbReference type="NCBIfam" id="TIGR03565">
    <property type="entry name" value="alk_sulf_monoox"/>
    <property type="match status" value="1"/>
</dbReference>
<dbReference type="NCBIfam" id="NF001939">
    <property type="entry name" value="PRK00719.1"/>
    <property type="match status" value="1"/>
</dbReference>
<dbReference type="PANTHER" id="PTHR42847">
    <property type="entry name" value="ALKANESULFONATE MONOOXYGENASE"/>
    <property type="match status" value="1"/>
</dbReference>
<dbReference type="PANTHER" id="PTHR42847:SF4">
    <property type="entry name" value="ALKANESULFONATE MONOOXYGENASE-RELATED"/>
    <property type="match status" value="1"/>
</dbReference>
<dbReference type="Pfam" id="PF00296">
    <property type="entry name" value="Bac_luciferase"/>
    <property type="match status" value="1"/>
</dbReference>
<dbReference type="SUPFAM" id="SSF51679">
    <property type="entry name" value="Bacterial luciferase-like"/>
    <property type="match status" value="1"/>
</dbReference>
<keyword id="KW-0285">Flavoprotein</keyword>
<keyword id="KW-0288">FMN</keyword>
<keyword id="KW-0503">Monooxygenase</keyword>
<keyword id="KW-0560">Oxidoreductase</keyword>
<keyword id="KW-1185">Reference proteome</keyword>
<reference key="1">
    <citation type="journal article" date="1999" name="J. Bacteriol.">
        <title>A novel reduced flavin mononucleotide-dependent methanesulfonate sulfonatase encoded by the sulfur-regulated msu operon of Pseudomonas aeruginosa.</title>
        <authorList>
            <person name="Kertesz M.A."/>
            <person name="Schmidt-Larbig K."/>
            <person name="Wueest T."/>
        </authorList>
    </citation>
    <scope>NUCLEOTIDE SEQUENCE [GENOMIC DNA]</scope>
    <scope>FUNCTION</scope>
    <source>
        <strain>ATCC 15692 / DSM 22644 / CIP 104116 / JCM 14847 / LMG 12228 / 1C / PRS 101 / PAO1</strain>
    </source>
</reference>
<reference key="2">
    <citation type="journal article" date="2000" name="Nature">
        <title>Complete genome sequence of Pseudomonas aeruginosa PAO1, an opportunistic pathogen.</title>
        <authorList>
            <person name="Stover C.K."/>
            <person name="Pham X.-Q.T."/>
            <person name="Erwin A.L."/>
            <person name="Mizoguchi S.D."/>
            <person name="Warrener P."/>
            <person name="Hickey M.J."/>
            <person name="Brinkman F.S.L."/>
            <person name="Hufnagle W.O."/>
            <person name="Kowalik D.J."/>
            <person name="Lagrou M."/>
            <person name="Garber R.L."/>
            <person name="Goltry L."/>
            <person name="Tolentino E."/>
            <person name="Westbrock-Wadman S."/>
            <person name="Yuan Y."/>
            <person name="Brody L.L."/>
            <person name="Coulter S.N."/>
            <person name="Folger K.R."/>
            <person name="Kas A."/>
            <person name="Larbig K."/>
            <person name="Lim R.M."/>
            <person name="Smith K.A."/>
            <person name="Spencer D.H."/>
            <person name="Wong G.K.-S."/>
            <person name="Wu Z."/>
            <person name="Paulsen I.T."/>
            <person name="Reizer J."/>
            <person name="Saier M.H. Jr."/>
            <person name="Hancock R.E.W."/>
            <person name="Lory S."/>
            <person name="Olson M.V."/>
        </authorList>
    </citation>
    <scope>NUCLEOTIDE SEQUENCE [LARGE SCALE GENOMIC DNA]</scope>
    <source>
        <strain>ATCC 15692 / DSM 22644 / CIP 104116 / JCM 14847 / LMG 12228 / 1C / PRS 101 / PAO1</strain>
    </source>
</reference>
<name>MSUD_PSEAE</name>
<proteinExistence type="evidence at transcript level"/>
<protein>
    <recommendedName>
        <fullName>Methanesulfonate monooxygenase</fullName>
        <ecNumber>1.14.14.5</ecNumber>
    </recommendedName>
    <alternativeName>
        <fullName>FMNH2-dependent methanesulfonate monooxygenase</fullName>
    </alternativeName>
    <alternativeName>
        <fullName>Methanesulfonate sulfonatase</fullName>
    </alternativeName>
</protein>
<comment type="function">
    <text evidence="1">Catalyzes the desulfonation of aliphatic sulfonates. Shows highest activity with methanesulfonate.</text>
</comment>
<comment type="catalytic activity">
    <reaction>
        <text>an alkanesulfonate + FMNH2 + O2 = an aldehyde + FMN + sulfite + H2O + 2 H(+)</text>
        <dbReference type="Rhea" id="RHEA:23064"/>
        <dbReference type="ChEBI" id="CHEBI:15377"/>
        <dbReference type="ChEBI" id="CHEBI:15378"/>
        <dbReference type="ChEBI" id="CHEBI:15379"/>
        <dbReference type="ChEBI" id="CHEBI:17359"/>
        <dbReference type="ChEBI" id="CHEBI:17478"/>
        <dbReference type="ChEBI" id="CHEBI:57618"/>
        <dbReference type="ChEBI" id="CHEBI:58210"/>
        <dbReference type="ChEBI" id="CHEBI:134249"/>
        <dbReference type="EC" id="1.14.14.5"/>
    </reaction>
</comment>
<comment type="induction">
    <text>Repressed by sulfate, cysteine, or thiocyanate.</text>
</comment>
<comment type="miscellaneous">
    <text>FMNH(2) which is absolutely required for this enzymatic reaction, is provided by MsuE.</text>
</comment>
<comment type="similarity">
    <text evidence="2">Belongs to the SsuD family.</text>
</comment>
<sequence>MNVFWFLPTHGDGHFLGTSQGARPVSLPYLKQVAQAADSLGYHGVLIPTGRSCEDSWVVASALAPLTERLRFLVAIRPGIVSPTVSARMAATLDRLSGGRLLINVVTGGDPDENRGDGIHLGHAERYEVTDEFLRVWRRVLQGEAVDFHGKHIHVENAKALYPPLQRPYPPLYFGGSSEAAHELAGEQVDVYLTWGEPLPAVAAKIADVRQRAARHGRTVKFGIRLHVIVRETAEEAWRAADRLIEHISDETIAAAQQSFARFDSEGQRRMAALHGGRRDRLEIQPNLWAGVGLVRGGAGTALVGDPRQVAERIGEYAELGIDSFIFSGYPHLEEAYRFAELVFPLLPEPYASLAGRGLTNLTGPFGEMIANDVLPARAGA</sequence>